<organism>
    <name type="scientific">Pseudomonas putida</name>
    <name type="common">Arthrobacter siderocapsulatus</name>
    <dbReference type="NCBI Taxonomy" id="303"/>
    <lineage>
        <taxon>Bacteria</taxon>
        <taxon>Pseudomonadati</taxon>
        <taxon>Pseudomonadota</taxon>
        <taxon>Gammaproteobacteria</taxon>
        <taxon>Pseudomonadales</taxon>
        <taxon>Pseudomonadaceae</taxon>
        <taxon>Pseudomonas</taxon>
    </lineage>
</organism>
<reference key="1">
    <citation type="journal article" date="1990" name="J. Bacteriol.">
        <title>Evolutionary differences in chromosomal locations of four early genes of the tryptophan pathway in fluorescent pseudomonads: DNA sequences and characterization of Pseudomonas putida trpE and trpGDC.</title>
        <authorList>
            <person name="Essar D.W."/>
            <person name="Eberly L."/>
            <person name="Crawford I.P."/>
        </authorList>
    </citation>
    <scope>NUCLEOTIDE SEQUENCE [GENOMIC DNA]</scope>
    <scope>FUNCTION</scope>
    <scope>DISRUPTION PHENOTYPE</scope>
    <source>
        <strain>ATCC 23287 / C1S</strain>
    </source>
</reference>
<reference key="2">
    <citation type="journal article" date="1978" name="J. Biol. Chem.">
        <title>Anthranilate synthetase component II from Pseudomonas putida. Covalent structure and identification of the cysteine residue involved in catalysis.</title>
        <authorList>
            <person name="Kawamura M."/>
            <person name="Keim P.S."/>
            <person name="Goto Y."/>
            <person name="Zalkin H."/>
            <person name="Heinrikson R.L."/>
        </authorList>
    </citation>
    <scope>PROTEIN SEQUENCE</scope>
    <scope>ACTIVE SITE</scope>
</reference>
<evidence type="ECO:0000250" key="1">
    <source>
        <dbReference type="UniProtKB" id="P00900"/>
    </source>
</evidence>
<evidence type="ECO:0000255" key="2">
    <source>
        <dbReference type="PROSITE-ProRule" id="PRU00605"/>
    </source>
</evidence>
<evidence type="ECO:0000269" key="3">
    <source>
    </source>
</evidence>
<evidence type="ECO:0000305" key="4"/>
<keyword id="KW-0028">Amino-acid biosynthesis</keyword>
<keyword id="KW-0057">Aromatic amino acid biosynthesis</keyword>
<keyword id="KW-0903">Direct protein sequencing</keyword>
<keyword id="KW-0315">Glutamine amidotransferase</keyword>
<keyword id="KW-0456">Lyase</keyword>
<keyword id="KW-0822">Tryptophan biosynthesis</keyword>
<name>TRPG_PSEPU</name>
<gene>
    <name type="primary">trpG</name>
</gene>
<accession>P00901</accession>
<proteinExistence type="evidence at protein level"/>
<sequence length="198" mass="21824">MLLMMIDNYDSFTYNVVQYLGELGAEVKVIRNDEMTIAQIEALNPERIVVSPGPCTPSEAGVSIEAILHFAGKLPILGVCLGHQSIGQAFGGDVVRARQVMHGKTSPVHHRDLGVFTGLNNPLTVTRYHSLVVKRETLPDCLEVTAWTAHEDGSVDEIMGLRHKTLNIEGVQFHPESILTEQGHELFANFLKQTGGRR</sequence>
<protein>
    <recommendedName>
        <fullName>Anthranilate synthase component 2</fullName>
        <shortName>AS</shortName>
        <shortName>ASII</shortName>
        <ecNumber>4.1.3.27</ecNumber>
    </recommendedName>
    <alternativeName>
        <fullName>Anthranilate synthase, GATase component</fullName>
    </alternativeName>
    <alternativeName>
        <fullName>Anthranilate synthase, glutamine amidotransferase component</fullName>
    </alternativeName>
</protein>
<dbReference type="EC" id="4.1.3.27"/>
<dbReference type="EMBL" id="M33799">
    <property type="protein sequence ID" value="AAA80553.1"/>
    <property type="molecule type" value="Genomic_DNA"/>
</dbReference>
<dbReference type="PIR" id="A01122">
    <property type="entry name" value="NNPS2P"/>
</dbReference>
<dbReference type="SMR" id="P00901"/>
<dbReference type="MEROPS" id="C26.955"/>
<dbReference type="eggNOG" id="COG0512">
    <property type="taxonomic scope" value="Bacteria"/>
</dbReference>
<dbReference type="UniPathway" id="UPA00035">
    <property type="reaction ID" value="UER00040"/>
</dbReference>
<dbReference type="GO" id="GO:0005829">
    <property type="term" value="C:cytosol"/>
    <property type="evidence" value="ECO:0007669"/>
    <property type="project" value="TreeGrafter"/>
</dbReference>
<dbReference type="GO" id="GO:0046820">
    <property type="term" value="F:4-amino-4-deoxychorismate synthase activity"/>
    <property type="evidence" value="ECO:0007669"/>
    <property type="project" value="TreeGrafter"/>
</dbReference>
<dbReference type="GO" id="GO:0004049">
    <property type="term" value="F:anthranilate synthase activity"/>
    <property type="evidence" value="ECO:0007669"/>
    <property type="project" value="UniProtKB-EC"/>
</dbReference>
<dbReference type="GO" id="GO:0000162">
    <property type="term" value="P:L-tryptophan biosynthetic process"/>
    <property type="evidence" value="ECO:0007669"/>
    <property type="project" value="UniProtKB-UniPathway"/>
</dbReference>
<dbReference type="GO" id="GO:0046654">
    <property type="term" value="P:tetrahydrofolate biosynthetic process"/>
    <property type="evidence" value="ECO:0007669"/>
    <property type="project" value="TreeGrafter"/>
</dbReference>
<dbReference type="CDD" id="cd01743">
    <property type="entry name" value="GATase1_Anthranilate_Synthase"/>
    <property type="match status" value="1"/>
</dbReference>
<dbReference type="FunFam" id="3.40.50.880:FF:000003">
    <property type="entry name" value="Anthranilate synthase component II"/>
    <property type="match status" value="1"/>
</dbReference>
<dbReference type="Gene3D" id="3.40.50.880">
    <property type="match status" value="1"/>
</dbReference>
<dbReference type="InterPro" id="IPR050472">
    <property type="entry name" value="Anth_synth/Amidotransfase"/>
</dbReference>
<dbReference type="InterPro" id="IPR029062">
    <property type="entry name" value="Class_I_gatase-like"/>
</dbReference>
<dbReference type="InterPro" id="IPR017926">
    <property type="entry name" value="GATASE"/>
</dbReference>
<dbReference type="InterPro" id="IPR006221">
    <property type="entry name" value="TrpG/PapA_dom"/>
</dbReference>
<dbReference type="NCBIfam" id="NF006462">
    <property type="entry name" value="PRK08857.1"/>
    <property type="match status" value="1"/>
</dbReference>
<dbReference type="NCBIfam" id="TIGR00566">
    <property type="entry name" value="trpG_papA"/>
    <property type="match status" value="1"/>
</dbReference>
<dbReference type="PANTHER" id="PTHR43418:SF4">
    <property type="entry name" value="MULTIFUNCTIONAL TRYPTOPHAN BIOSYNTHESIS PROTEIN"/>
    <property type="match status" value="1"/>
</dbReference>
<dbReference type="PANTHER" id="PTHR43418">
    <property type="entry name" value="MULTIFUNCTIONAL TRYPTOPHAN BIOSYNTHESIS PROTEIN-RELATED"/>
    <property type="match status" value="1"/>
</dbReference>
<dbReference type="Pfam" id="PF00117">
    <property type="entry name" value="GATase"/>
    <property type="match status" value="1"/>
</dbReference>
<dbReference type="PRINTS" id="PR00097">
    <property type="entry name" value="ANTSNTHASEII"/>
</dbReference>
<dbReference type="PRINTS" id="PR00099">
    <property type="entry name" value="CPSGATASE"/>
</dbReference>
<dbReference type="PRINTS" id="PR00096">
    <property type="entry name" value="GATASE"/>
</dbReference>
<dbReference type="SUPFAM" id="SSF52317">
    <property type="entry name" value="Class I glutamine amidotransferase-like"/>
    <property type="match status" value="1"/>
</dbReference>
<dbReference type="PROSITE" id="PS51273">
    <property type="entry name" value="GATASE_TYPE_1"/>
    <property type="match status" value="1"/>
</dbReference>
<feature type="chain" id="PRO_0000056896" description="Anthranilate synthase component 2">
    <location>
        <begin position="1"/>
        <end position="198"/>
    </location>
</feature>
<feature type="domain" description="Glutamine amidotransferase type-1" evidence="2">
    <location>
        <begin position="2"/>
        <end position="198"/>
    </location>
</feature>
<feature type="active site" description="Nucleophile; for GATase activity" evidence="2">
    <location>
        <position position="80"/>
    </location>
</feature>
<feature type="active site" description="For GATase activity" evidence="2">
    <location>
        <position position="174"/>
    </location>
</feature>
<feature type="active site" description="For GATase activity" evidence="2">
    <location>
        <position position="176"/>
    </location>
</feature>
<feature type="binding site" evidence="1">
    <location>
        <begin position="53"/>
        <end position="55"/>
    </location>
    <ligand>
        <name>L-glutamine</name>
        <dbReference type="ChEBI" id="CHEBI:58359"/>
    </ligand>
</feature>
<feature type="binding site" evidence="1">
    <location>
        <position position="84"/>
    </location>
    <ligand>
        <name>L-glutamine</name>
        <dbReference type="ChEBI" id="CHEBI:58359"/>
    </ligand>
</feature>
<feature type="binding site" evidence="1">
    <location>
        <begin position="130"/>
        <end position="131"/>
    </location>
    <ligand>
        <name>L-glutamine</name>
        <dbReference type="ChEBI" id="CHEBI:58359"/>
    </ligand>
</feature>
<feature type="sequence conflict" description="In Ref. 2; AA sequence." evidence="4" ref="2">
    <location>
        <position position="5"/>
    </location>
</feature>
<comment type="function">
    <text evidence="3">Part of a heterotetrameric complex that catalyzes the two-step biosynthesis of anthranilate, an intermediate in the biosynthesis of L-tryptophan. In the first step, the glutamine-binding beta subunit (TrpG) of anthranilate synthase (AS) provides the glutamine amidotransferase activity which generates ammonia as a substrate that, along with chorismate, is used in the second step, catalyzed by the large alpha subunit of AS (TrpE) to produce anthranilate. In the absence of TrpG, TrpE can synthesize anthranilate directly from chorismate and high concentrations of ammonia.</text>
</comment>
<comment type="catalytic activity">
    <reaction>
        <text>chorismate + L-glutamine = anthranilate + pyruvate + L-glutamate + H(+)</text>
        <dbReference type="Rhea" id="RHEA:21732"/>
        <dbReference type="ChEBI" id="CHEBI:15361"/>
        <dbReference type="ChEBI" id="CHEBI:15378"/>
        <dbReference type="ChEBI" id="CHEBI:16567"/>
        <dbReference type="ChEBI" id="CHEBI:29748"/>
        <dbReference type="ChEBI" id="CHEBI:29985"/>
        <dbReference type="ChEBI" id="CHEBI:58359"/>
        <dbReference type="EC" id="4.1.3.27"/>
    </reaction>
</comment>
<comment type="pathway">
    <text>Amino-acid biosynthesis; L-tryptophan biosynthesis; L-tryptophan from chorismate: step 1/5.</text>
</comment>
<comment type="subunit">
    <text evidence="4">Heterotetramer consisting of two non-identical subunits: a beta subunit (TrpG) and a large alpha subunit (TrpE).</text>
</comment>
<comment type="disruption phenotype">
    <text evidence="3">Cells lacking this gene fail to grow on low-ammonia medium but grew on the high-ammonium medium.</text>
</comment>